<protein>
    <recommendedName>
        <fullName evidence="1">ATP-dependent protease ATPase subunit HslU</fullName>
    </recommendedName>
    <alternativeName>
        <fullName evidence="1">Heat shock protein HslU</fullName>
    </alternativeName>
    <alternativeName>
        <fullName evidence="1">Unfoldase HslU</fullName>
    </alternativeName>
</protein>
<proteinExistence type="inferred from homology"/>
<gene>
    <name evidence="1" type="primary">hslU</name>
    <name type="ordered locus">c4884</name>
</gene>
<feature type="chain" id="PRO_0000160502" description="ATP-dependent protease ATPase subunit HslU">
    <location>
        <begin position="1"/>
        <end position="443"/>
    </location>
</feature>
<feature type="binding site" evidence="1">
    <location>
        <position position="18"/>
    </location>
    <ligand>
        <name>ATP</name>
        <dbReference type="ChEBI" id="CHEBI:30616"/>
    </ligand>
</feature>
<feature type="binding site" evidence="1">
    <location>
        <begin position="60"/>
        <end position="65"/>
    </location>
    <ligand>
        <name>ATP</name>
        <dbReference type="ChEBI" id="CHEBI:30616"/>
    </ligand>
</feature>
<feature type="binding site" evidence="1">
    <location>
        <position position="256"/>
    </location>
    <ligand>
        <name>ATP</name>
        <dbReference type="ChEBI" id="CHEBI:30616"/>
    </ligand>
</feature>
<feature type="binding site" evidence="1">
    <location>
        <position position="321"/>
    </location>
    <ligand>
        <name>ATP</name>
        <dbReference type="ChEBI" id="CHEBI:30616"/>
    </ligand>
</feature>
<feature type="binding site" evidence="1">
    <location>
        <position position="393"/>
    </location>
    <ligand>
        <name>ATP</name>
        <dbReference type="ChEBI" id="CHEBI:30616"/>
    </ligand>
</feature>
<evidence type="ECO:0000255" key="1">
    <source>
        <dbReference type="HAMAP-Rule" id="MF_00249"/>
    </source>
</evidence>
<reference key="1">
    <citation type="journal article" date="2002" name="Proc. Natl. Acad. Sci. U.S.A.">
        <title>Extensive mosaic structure revealed by the complete genome sequence of uropathogenic Escherichia coli.</title>
        <authorList>
            <person name="Welch R.A."/>
            <person name="Burland V."/>
            <person name="Plunkett G. III"/>
            <person name="Redford P."/>
            <person name="Roesch P."/>
            <person name="Rasko D."/>
            <person name="Buckles E.L."/>
            <person name="Liou S.-R."/>
            <person name="Boutin A."/>
            <person name="Hackett J."/>
            <person name="Stroud D."/>
            <person name="Mayhew G.F."/>
            <person name="Rose D.J."/>
            <person name="Zhou S."/>
            <person name="Schwartz D.C."/>
            <person name="Perna N.T."/>
            <person name="Mobley H.L.T."/>
            <person name="Donnenberg M.S."/>
            <person name="Blattner F.R."/>
        </authorList>
    </citation>
    <scope>NUCLEOTIDE SEQUENCE [LARGE SCALE GENOMIC DNA]</scope>
    <source>
        <strain>CFT073 / ATCC 700928 / UPEC</strain>
    </source>
</reference>
<comment type="function">
    <text evidence="1">ATPase subunit of a proteasome-like degradation complex; this subunit has chaperone activity. The binding of ATP and its subsequent hydrolysis by HslU are essential for unfolding of protein substrates subsequently hydrolyzed by HslV. HslU recognizes the N-terminal part of its protein substrates and unfolds these before they are guided to HslV for hydrolysis.</text>
</comment>
<comment type="subunit">
    <text evidence="1">A double ring-shaped homohexamer of HslV is capped on each side by a ring-shaped HslU homohexamer. The assembly of the HslU/HslV complex is dependent on binding of ATP.</text>
</comment>
<comment type="subcellular location">
    <subcellularLocation>
        <location evidence="1">Cytoplasm</location>
    </subcellularLocation>
</comment>
<comment type="induction">
    <text evidence="1">By heat shock.</text>
</comment>
<comment type="similarity">
    <text evidence="1">Belongs to the ClpX chaperone family. HslU subfamily.</text>
</comment>
<name>HSLU_ECOL6</name>
<keyword id="KW-0067">ATP-binding</keyword>
<keyword id="KW-0143">Chaperone</keyword>
<keyword id="KW-0963">Cytoplasm</keyword>
<keyword id="KW-0547">Nucleotide-binding</keyword>
<keyword id="KW-1185">Reference proteome</keyword>
<keyword id="KW-0346">Stress response</keyword>
<accession>Q8FBC0</accession>
<sequence>MSEMTPREIVSELDKHIIGQDNAKRSVAIALRNRWRRMQLNEELRHEVTPKNILMIGPTGVGKTEIARRLAKLANAPFIKVEATKFTEVGYVGKEVDSIIRDLTDAAVKMVRVQAIEKNRYRAEELAEERILDVLIPPAKNNWGQTEQQQEPSAARQAFRKKLREGQLDDKEIEIDLAAAPMGVEIMAPPGMEEMTSQLQSMFQNLGGQKQKARKLKIKDAMKLLIEEEAAKLVNPEELKQDAIDAVEQHGIVFIDEIDKICKRGESSGPDVSREGVQRDLLPLVEGCTVSTKHGMVKTDHILFIASGAFQIAKPSDLIPELQGRLPIRVELQALTTSDFERILTEPNASITVQYKALMATEGVNIEFTDSGIKRIAEAAWQVNESTENIGARRLHTVLERLMEEISYDASDLSGQTITIDADYVSKHLDALVADEDLSRFIL</sequence>
<dbReference type="EMBL" id="AE014075">
    <property type="protein sequence ID" value="AAN83312.1"/>
    <property type="molecule type" value="Genomic_DNA"/>
</dbReference>
<dbReference type="RefSeq" id="WP_001293344.1">
    <property type="nucleotide sequence ID" value="NZ_CP051263.1"/>
</dbReference>
<dbReference type="SMR" id="Q8FBC0"/>
<dbReference type="STRING" id="199310.c4884"/>
<dbReference type="KEGG" id="ecc:c4884"/>
<dbReference type="eggNOG" id="COG1220">
    <property type="taxonomic scope" value="Bacteria"/>
</dbReference>
<dbReference type="HOGENOM" id="CLU_033123_0_0_6"/>
<dbReference type="BioCyc" id="ECOL199310:C4884-MONOMER"/>
<dbReference type="BRENDA" id="3.4.25.2">
    <property type="organism ID" value="2026"/>
</dbReference>
<dbReference type="Proteomes" id="UP000001410">
    <property type="component" value="Chromosome"/>
</dbReference>
<dbReference type="GO" id="GO:0009376">
    <property type="term" value="C:HslUV protease complex"/>
    <property type="evidence" value="ECO:0007669"/>
    <property type="project" value="UniProtKB-UniRule"/>
</dbReference>
<dbReference type="GO" id="GO:0005524">
    <property type="term" value="F:ATP binding"/>
    <property type="evidence" value="ECO:0007669"/>
    <property type="project" value="UniProtKB-UniRule"/>
</dbReference>
<dbReference type="GO" id="GO:0016887">
    <property type="term" value="F:ATP hydrolysis activity"/>
    <property type="evidence" value="ECO:0007669"/>
    <property type="project" value="InterPro"/>
</dbReference>
<dbReference type="GO" id="GO:0008233">
    <property type="term" value="F:peptidase activity"/>
    <property type="evidence" value="ECO:0007669"/>
    <property type="project" value="InterPro"/>
</dbReference>
<dbReference type="GO" id="GO:0036402">
    <property type="term" value="F:proteasome-activating activity"/>
    <property type="evidence" value="ECO:0007669"/>
    <property type="project" value="UniProtKB-UniRule"/>
</dbReference>
<dbReference type="GO" id="GO:0043335">
    <property type="term" value="P:protein unfolding"/>
    <property type="evidence" value="ECO:0007669"/>
    <property type="project" value="UniProtKB-UniRule"/>
</dbReference>
<dbReference type="GO" id="GO:0051603">
    <property type="term" value="P:proteolysis involved in protein catabolic process"/>
    <property type="evidence" value="ECO:0007669"/>
    <property type="project" value="TreeGrafter"/>
</dbReference>
<dbReference type="CDD" id="cd19498">
    <property type="entry name" value="RecA-like_HslU"/>
    <property type="match status" value="1"/>
</dbReference>
<dbReference type="FunFam" id="1.10.8.10:FF:000012">
    <property type="entry name" value="ATP-dependent protease ATPase subunit HslU"/>
    <property type="match status" value="1"/>
</dbReference>
<dbReference type="FunFam" id="1.10.8.10:FF:000028">
    <property type="entry name" value="ATP-dependent protease ATPase subunit HslU"/>
    <property type="match status" value="1"/>
</dbReference>
<dbReference type="FunFam" id="1.10.8.60:FF:000027">
    <property type="entry name" value="ATP-dependent protease ATPase subunit HslU"/>
    <property type="match status" value="1"/>
</dbReference>
<dbReference type="FunFam" id="3.40.50.300:FF:000213">
    <property type="entry name" value="ATP-dependent protease ATPase subunit HslU"/>
    <property type="match status" value="1"/>
</dbReference>
<dbReference type="FunFam" id="3.40.50.300:FF:000220">
    <property type="entry name" value="ATP-dependent protease ATPase subunit HslU"/>
    <property type="match status" value="1"/>
</dbReference>
<dbReference type="Gene3D" id="1.10.8.60">
    <property type="match status" value="1"/>
</dbReference>
<dbReference type="Gene3D" id="1.10.8.10">
    <property type="entry name" value="DNA helicase RuvA subunit, C-terminal domain"/>
    <property type="match status" value="2"/>
</dbReference>
<dbReference type="Gene3D" id="3.40.50.300">
    <property type="entry name" value="P-loop containing nucleotide triphosphate hydrolases"/>
    <property type="match status" value="1"/>
</dbReference>
<dbReference type="HAMAP" id="MF_00249">
    <property type="entry name" value="HslU"/>
    <property type="match status" value="1"/>
</dbReference>
<dbReference type="InterPro" id="IPR003593">
    <property type="entry name" value="AAA+_ATPase"/>
</dbReference>
<dbReference type="InterPro" id="IPR050052">
    <property type="entry name" value="ATP-dep_Clp_protease_ClpX"/>
</dbReference>
<dbReference type="InterPro" id="IPR003959">
    <property type="entry name" value="ATPase_AAA_core"/>
</dbReference>
<dbReference type="InterPro" id="IPR019489">
    <property type="entry name" value="Clp_ATPase_C"/>
</dbReference>
<dbReference type="InterPro" id="IPR004491">
    <property type="entry name" value="HslU"/>
</dbReference>
<dbReference type="InterPro" id="IPR027417">
    <property type="entry name" value="P-loop_NTPase"/>
</dbReference>
<dbReference type="NCBIfam" id="TIGR00390">
    <property type="entry name" value="hslU"/>
    <property type="match status" value="1"/>
</dbReference>
<dbReference type="NCBIfam" id="NF003544">
    <property type="entry name" value="PRK05201.1"/>
    <property type="match status" value="1"/>
</dbReference>
<dbReference type="PANTHER" id="PTHR48102">
    <property type="entry name" value="ATP-DEPENDENT CLP PROTEASE ATP-BINDING SUBUNIT CLPX-LIKE, MITOCHONDRIAL-RELATED"/>
    <property type="match status" value="1"/>
</dbReference>
<dbReference type="PANTHER" id="PTHR48102:SF3">
    <property type="entry name" value="ATP-DEPENDENT PROTEASE ATPASE SUBUNIT HSLU"/>
    <property type="match status" value="1"/>
</dbReference>
<dbReference type="Pfam" id="PF00004">
    <property type="entry name" value="AAA"/>
    <property type="match status" value="1"/>
</dbReference>
<dbReference type="Pfam" id="PF07724">
    <property type="entry name" value="AAA_2"/>
    <property type="match status" value="1"/>
</dbReference>
<dbReference type="SMART" id="SM00382">
    <property type="entry name" value="AAA"/>
    <property type="match status" value="1"/>
</dbReference>
<dbReference type="SMART" id="SM01086">
    <property type="entry name" value="ClpB_D2-small"/>
    <property type="match status" value="1"/>
</dbReference>
<dbReference type="SUPFAM" id="SSF52540">
    <property type="entry name" value="P-loop containing nucleoside triphosphate hydrolases"/>
    <property type="match status" value="1"/>
</dbReference>
<organism>
    <name type="scientific">Escherichia coli O6:H1 (strain CFT073 / ATCC 700928 / UPEC)</name>
    <dbReference type="NCBI Taxonomy" id="199310"/>
    <lineage>
        <taxon>Bacteria</taxon>
        <taxon>Pseudomonadati</taxon>
        <taxon>Pseudomonadota</taxon>
        <taxon>Gammaproteobacteria</taxon>
        <taxon>Enterobacterales</taxon>
        <taxon>Enterobacteriaceae</taxon>
        <taxon>Escherichia</taxon>
    </lineage>
</organism>